<evidence type="ECO:0000250" key="1"/>
<evidence type="ECO:0000255" key="2"/>
<evidence type="ECO:0000305" key="3"/>
<protein>
    <recommendedName>
        <fullName>Glycoprotein endo-alpha-1,2-mannosidase-like protein</fullName>
        <ecNumber>3.2.1.-</ecNumber>
    </recommendedName>
</protein>
<reference key="1">
    <citation type="journal article" date="2013" name="Nature">
        <title>The zebrafish reference genome sequence and its relationship to the human genome.</title>
        <authorList>
            <person name="Howe K."/>
            <person name="Clark M.D."/>
            <person name="Torroja C.F."/>
            <person name="Torrance J."/>
            <person name="Berthelot C."/>
            <person name="Muffato M."/>
            <person name="Collins J.E."/>
            <person name="Humphray S."/>
            <person name="McLaren K."/>
            <person name="Matthews L."/>
            <person name="McLaren S."/>
            <person name="Sealy I."/>
            <person name="Caccamo M."/>
            <person name="Churcher C."/>
            <person name="Scott C."/>
            <person name="Barrett J.C."/>
            <person name="Koch R."/>
            <person name="Rauch G.J."/>
            <person name="White S."/>
            <person name="Chow W."/>
            <person name="Kilian B."/>
            <person name="Quintais L.T."/>
            <person name="Guerra-Assuncao J.A."/>
            <person name="Zhou Y."/>
            <person name="Gu Y."/>
            <person name="Yen J."/>
            <person name="Vogel J.H."/>
            <person name="Eyre T."/>
            <person name="Redmond S."/>
            <person name="Banerjee R."/>
            <person name="Chi J."/>
            <person name="Fu B."/>
            <person name="Langley E."/>
            <person name="Maguire S.F."/>
            <person name="Laird G.K."/>
            <person name="Lloyd D."/>
            <person name="Kenyon E."/>
            <person name="Donaldson S."/>
            <person name="Sehra H."/>
            <person name="Almeida-King J."/>
            <person name="Loveland J."/>
            <person name="Trevanion S."/>
            <person name="Jones M."/>
            <person name="Quail M."/>
            <person name="Willey D."/>
            <person name="Hunt A."/>
            <person name="Burton J."/>
            <person name="Sims S."/>
            <person name="McLay K."/>
            <person name="Plumb B."/>
            <person name="Davis J."/>
            <person name="Clee C."/>
            <person name="Oliver K."/>
            <person name="Clark R."/>
            <person name="Riddle C."/>
            <person name="Elliot D."/>
            <person name="Threadgold G."/>
            <person name="Harden G."/>
            <person name="Ware D."/>
            <person name="Begum S."/>
            <person name="Mortimore B."/>
            <person name="Kerry G."/>
            <person name="Heath P."/>
            <person name="Phillimore B."/>
            <person name="Tracey A."/>
            <person name="Corby N."/>
            <person name="Dunn M."/>
            <person name="Johnson C."/>
            <person name="Wood J."/>
            <person name="Clark S."/>
            <person name="Pelan S."/>
            <person name="Griffiths G."/>
            <person name="Smith M."/>
            <person name="Glithero R."/>
            <person name="Howden P."/>
            <person name="Barker N."/>
            <person name="Lloyd C."/>
            <person name="Stevens C."/>
            <person name="Harley J."/>
            <person name="Holt K."/>
            <person name="Panagiotidis G."/>
            <person name="Lovell J."/>
            <person name="Beasley H."/>
            <person name="Henderson C."/>
            <person name="Gordon D."/>
            <person name="Auger K."/>
            <person name="Wright D."/>
            <person name="Collins J."/>
            <person name="Raisen C."/>
            <person name="Dyer L."/>
            <person name="Leung K."/>
            <person name="Robertson L."/>
            <person name="Ambridge K."/>
            <person name="Leongamornlert D."/>
            <person name="McGuire S."/>
            <person name="Gilderthorp R."/>
            <person name="Griffiths C."/>
            <person name="Manthravadi D."/>
            <person name="Nichol S."/>
            <person name="Barker G."/>
            <person name="Whitehead S."/>
            <person name="Kay M."/>
            <person name="Brown J."/>
            <person name="Murnane C."/>
            <person name="Gray E."/>
            <person name="Humphries M."/>
            <person name="Sycamore N."/>
            <person name="Barker D."/>
            <person name="Saunders D."/>
            <person name="Wallis J."/>
            <person name="Babbage A."/>
            <person name="Hammond S."/>
            <person name="Mashreghi-Mohammadi M."/>
            <person name="Barr L."/>
            <person name="Martin S."/>
            <person name="Wray P."/>
            <person name="Ellington A."/>
            <person name="Matthews N."/>
            <person name="Ellwood M."/>
            <person name="Woodmansey R."/>
            <person name="Clark G."/>
            <person name="Cooper J."/>
            <person name="Tromans A."/>
            <person name="Grafham D."/>
            <person name="Skuce C."/>
            <person name="Pandian R."/>
            <person name="Andrews R."/>
            <person name="Harrison E."/>
            <person name="Kimberley A."/>
            <person name="Garnett J."/>
            <person name="Fosker N."/>
            <person name="Hall R."/>
            <person name="Garner P."/>
            <person name="Kelly D."/>
            <person name="Bird C."/>
            <person name="Palmer S."/>
            <person name="Gehring I."/>
            <person name="Berger A."/>
            <person name="Dooley C.M."/>
            <person name="Ersan-Urun Z."/>
            <person name="Eser C."/>
            <person name="Geiger H."/>
            <person name="Geisler M."/>
            <person name="Karotki L."/>
            <person name="Kirn A."/>
            <person name="Konantz J."/>
            <person name="Konantz M."/>
            <person name="Oberlander M."/>
            <person name="Rudolph-Geiger S."/>
            <person name="Teucke M."/>
            <person name="Lanz C."/>
            <person name="Raddatz G."/>
            <person name="Osoegawa K."/>
            <person name="Zhu B."/>
            <person name="Rapp A."/>
            <person name="Widaa S."/>
            <person name="Langford C."/>
            <person name="Yang F."/>
            <person name="Schuster S.C."/>
            <person name="Carter N.P."/>
            <person name="Harrow J."/>
            <person name="Ning Z."/>
            <person name="Herrero J."/>
            <person name="Searle S.M."/>
            <person name="Enright A."/>
            <person name="Geisler R."/>
            <person name="Plasterk R.H."/>
            <person name="Lee C."/>
            <person name="Westerfield M."/>
            <person name="de Jong P.J."/>
            <person name="Zon L.I."/>
            <person name="Postlethwait J.H."/>
            <person name="Nusslein-Volhard C."/>
            <person name="Hubbard T.J."/>
            <person name="Roest Crollius H."/>
            <person name="Rogers J."/>
            <person name="Stemple D.L."/>
        </authorList>
    </citation>
    <scope>NUCLEOTIDE SEQUENCE [LARGE SCALE GENOMIC DNA]</scope>
    <source>
        <strain>Tuebingen</strain>
    </source>
</reference>
<accession>Q1L8D2</accession>
<keyword id="KW-0333">Golgi apparatus</keyword>
<keyword id="KW-0378">Hydrolase</keyword>
<keyword id="KW-0472">Membrane</keyword>
<keyword id="KW-1185">Reference proteome</keyword>
<keyword id="KW-0735">Signal-anchor</keyword>
<keyword id="KW-0812">Transmembrane</keyword>
<keyword id="KW-1133">Transmembrane helix</keyword>
<name>MANEL_DANRE</name>
<organism>
    <name type="scientific">Danio rerio</name>
    <name type="common">Zebrafish</name>
    <name type="synonym">Brachydanio rerio</name>
    <dbReference type="NCBI Taxonomy" id="7955"/>
    <lineage>
        <taxon>Eukaryota</taxon>
        <taxon>Metazoa</taxon>
        <taxon>Chordata</taxon>
        <taxon>Craniata</taxon>
        <taxon>Vertebrata</taxon>
        <taxon>Euteleostomi</taxon>
        <taxon>Actinopterygii</taxon>
        <taxon>Neopterygii</taxon>
        <taxon>Teleostei</taxon>
        <taxon>Ostariophysi</taxon>
        <taxon>Cypriniformes</taxon>
        <taxon>Danionidae</taxon>
        <taxon>Danioninae</taxon>
        <taxon>Danio</taxon>
    </lineage>
</organism>
<comment type="subcellular location">
    <subcellularLocation>
        <location evidence="1">Golgi apparatus membrane</location>
        <topology evidence="1">Single-pass type II membrane protein</topology>
    </subcellularLocation>
</comment>
<comment type="similarity">
    <text evidence="3">Belongs to the glycosyl hydrolase 99 family.</text>
</comment>
<feature type="chain" id="PRO_0000282322" description="Glycoprotein endo-alpha-1,2-mannosidase-like protein">
    <location>
        <begin position="1"/>
        <end position="442"/>
    </location>
</feature>
<feature type="topological domain" description="Cytoplasmic" evidence="2">
    <location>
        <begin position="1"/>
        <end position="8"/>
    </location>
</feature>
<feature type="transmembrane region" description="Helical; Signal-anchor for type II membrane protein" evidence="2">
    <location>
        <begin position="9"/>
        <end position="29"/>
    </location>
</feature>
<feature type="topological domain" description="Lumenal" evidence="2">
    <location>
        <begin position="30"/>
        <end position="442"/>
    </location>
</feature>
<proteinExistence type="inferred from homology"/>
<gene>
    <name type="primary">maneal</name>
    <name type="ORF">si:ch211-30b16.2</name>
</gene>
<dbReference type="EC" id="3.2.1.-"/>
<dbReference type="EMBL" id="CR925717">
    <property type="protein sequence ID" value="CAK04938.1"/>
    <property type="molecule type" value="Genomic_DNA"/>
</dbReference>
<dbReference type="RefSeq" id="NP_001038579.1">
    <property type="nucleotide sequence ID" value="NM_001045114.1"/>
</dbReference>
<dbReference type="SMR" id="Q1L8D2"/>
<dbReference type="FunCoup" id="Q1L8D2">
    <property type="interactions" value="89"/>
</dbReference>
<dbReference type="STRING" id="7955.ENSDARP00000073408"/>
<dbReference type="CAZy" id="GH99">
    <property type="family name" value="Glycoside Hydrolase Family 99"/>
</dbReference>
<dbReference type="PaxDb" id="7955-ENSDARP00000073408"/>
<dbReference type="Ensembl" id="ENSDART00000078951">
    <property type="protein sequence ID" value="ENSDARP00000073408"/>
    <property type="gene ID" value="ENSDARG00000056450"/>
</dbReference>
<dbReference type="GeneID" id="566679"/>
<dbReference type="KEGG" id="dre:566679"/>
<dbReference type="AGR" id="ZFIN:ZDB-GENE-060503-511"/>
<dbReference type="CTD" id="149175"/>
<dbReference type="ZFIN" id="ZDB-GENE-060503-511">
    <property type="gene designation" value="maneal"/>
</dbReference>
<dbReference type="eggNOG" id="ENOG502QPJV">
    <property type="taxonomic scope" value="Eukaryota"/>
</dbReference>
<dbReference type="HOGENOM" id="CLU_042710_1_1_1"/>
<dbReference type="InParanoid" id="Q1L8D2"/>
<dbReference type="OMA" id="FHMSSSD"/>
<dbReference type="OrthoDB" id="406152at2759"/>
<dbReference type="PhylomeDB" id="Q1L8D2"/>
<dbReference type="TreeFam" id="TF324051"/>
<dbReference type="PRO" id="PR:Q1L8D2"/>
<dbReference type="Proteomes" id="UP000000437">
    <property type="component" value="Chromosome 19"/>
</dbReference>
<dbReference type="Bgee" id="ENSDARG00000056450">
    <property type="expression patterns" value="Expressed in brain and 8 other cell types or tissues"/>
</dbReference>
<dbReference type="GO" id="GO:0000139">
    <property type="term" value="C:Golgi membrane"/>
    <property type="evidence" value="ECO:0007669"/>
    <property type="project" value="UniProtKB-SubCell"/>
</dbReference>
<dbReference type="GO" id="GO:0004559">
    <property type="term" value="F:alpha-mannosidase activity"/>
    <property type="evidence" value="ECO:0000318"/>
    <property type="project" value="GO_Central"/>
</dbReference>
<dbReference type="CDD" id="cd11574">
    <property type="entry name" value="GH99"/>
    <property type="match status" value="1"/>
</dbReference>
<dbReference type="FunFam" id="3.20.20.80:FF:000019">
    <property type="entry name" value="glycoprotein endo-alpha-1,2-mannosidase"/>
    <property type="match status" value="1"/>
</dbReference>
<dbReference type="Gene3D" id="3.20.20.80">
    <property type="entry name" value="Glycosidases"/>
    <property type="match status" value="1"/>
</dbReference>
<dbReference type="InterPro" id="IPR026071">
    <property type="entry name" value="Glyco_Hydrolase_99"/>
</dbReference>
<dbReference type="PANTHER" id="PTHR13572">
    <property type="entry name" value="ENDO-ALPHA-1,2-MANNOSIDASE"/>
    <property type="match status" value="1"/>
</dbReference>
<dbReference type="PANTHER" id="PTHR13572:SF2">
    <property type="entry name" value="GLYCOPROTEIN ENDO-ALPHA-1,2-MANNOSIDASE-LIKE PROTEIN"/>
    <property type="match status" value="1"/>
</dbReference>
<dbReference type="Pfam" id="PF16317">
    <property type="entry name" value="Glyco_hydro_99"/>
    <property type="match status" value="1"/>
</dbReference>
<sequence length="442" mass="50313">MNRLRRKACVALLLFTLFIFGTMMGLRTLKPTDGFSDLAPGMELMPLVGERMEQRPNHLIESAGQNGGLHSDTKIVFSNSGPDHSIFYDIHIFYYLWYGSPQMDSSYIHWDHVLVPHWDPKIAASHPKGRHNPPDDIASSYYPELGPYSSRDPEVIESHMAQIEAAAAGVVVLSWYPPGVADEHGKPSEDLVPAVMDAAHKHSIKVAFHLQPYKGRTDISVHDNIKYIIDTYGTHGAFYRFKSSTGKILPLFYVYDSYLTPPETWAELLTIRGSHSLRGTPYDGIFIALIVEERHKQDILAGGFDGMYTYFASNGFSFGSSHQNWKAIKAFCDKNNLLFVPSAGPGYMDTAVRPWNNHNTRNRVNGRYYETSLQAAMSVRPDIITITSFNEWHEGTQIERAVPKKTVARLYLDYKPHQPDHYLELTKKWAEHFSKEKEQWLM</sequence>